<protein>
    <recommendedName>
        <fullName evidence="1">Serine--tRNA ligase</fullName>
        <ecNumber evidence="1">6.1.1.11</ecNumber>
    </recommendedName>
    <alternativeName>
        <fullName evidence="1">Seryl-tRNA synthetase</fullName>
        <shortName evidence="1">SerRS</shortName>
    </alternativeName>
    <alternativeName>
        <fullName evidence="1">Seryl-tRNA(Ser/Sec) synthetase</fullName>
    </alternativeName>
</protein>
<feature type="chain" id="PRO_1000019797" description="Serine--tRNA ligase">
    <location>
        <begin position="1"/>
        <end position="418"/>
    </location>
</feature>
<feature type="binding site" evidence="1">
    <location>
        <begin position="227"/>
        <end position="229"/>
    </location>
    <ligand>
        <name>L-serine</name>
        <dbReference type="ChEBI" id="CHEBI:33384"/>
    </ligand>
</feature>
<feature type="binding site" evidence="1">
    <location>
        <begin position="258"/>
        <end position="260"/>
    </location>
    <ligand>
        <name>ATP</name>
        <dbReference type="ChEBI" id="CHEBI:30616"/>
    </ligand>
</feature>
<feature type="binding site" evidence="1">
    <location>
        <position position="274"/>
    </location>
    <ligand>
        <name>ATP</name>
        <dbReference type="ChEBI" id="CHEBI:30616"/>
    </ligand>
</feature>
<feature type="binding site" evidence="1">
    <location>
        <position position="281"/>
    </location>
    <ligand>
        <name>L-serine</name>
        <dbReference type="ChEBI" id="CHEBI:33384"/>
    </ligand>
</feature>
<feature type="binding site" evidence="1">
    <location>
        <begin position="345"/>
        <end position="348"/>
    </location>
    <ligand>
        <name>ATP</name>
        <dbReference type="ChEBI" id="CHEBI:30616"/>
    </ligand>
</feature>
<feature type="binding site" evidence="1">
    <location>
        <position position="380"/>
    </location>
    <ligand>
        <name>L-serine</name>
        <dbReference type="ChEBI" id="CHEBI:33384"/>
    </ligand>
</feature>
<accession>Q0S9E8</accession>
<comment type="function">
    <text evidence="1">Catalyzes the attachment of serine to tRNA(Ser). Is also able to aminoacylate tRNA(Sec) with serine, to form the misacylated tRNA L-seryl-tRNA(Sec), which will be further converted into selenocysteinyl-tRNA(Sec).</text>
</comment>
<comment type="catalytic activity">
    <reaction evidence="1">
        <text>tRNA(Ser) + L-serine + ATP = L-seryl-tRNA(Ser) + AMP + diphosphate + H(+)</text>
        <dbReference type="Rhea" id="RHEA:12292"/>
        <dbReference type="Rhea" id="RHEA-COMP:9669"/>
        <dbReference type="Rhea" id="RHEA-COMP:9703"/>
        <dbReference type="ChEBI" id="CHEBI:15378"/>
        <dbReference type="ChEBI" id="CHEBI:30616"/>
        <dbReference type="ChEBI" id="CHEBI:33019"/>
        <dbReference type="ChEBI" id="CHEBI:33384"/>
        <dbReference type="ChEBI" id="CHEBI:78442"/>
        <dbReference type="ChEBI" id="CHEBI:78533"/>
        <dbReference type="ChEBI" id="CHEBI:456215"/>
        <dbReference type="EC" id="6.1.1.11"/>
    </reaction>
</comment>
<comment type="catalytic activity">
    <reaction evidence="1">
        <text>tRNA(Sec) + L-serine + ATP = L-seryl-tRNA(Sec) + AMP + diphosphate + H(+)</text>
        <dbReference type="Rhea" id="RHEA:42580"/>
        <dbReference type="Rhea" id="RHEA-COMP:9742"/>
        <dbReference type="Rhea" id="RHEA-COMP:10128"/>
        <dbReference type="ChEBI" id="CHEBI:15378"/>
        <dbReference type="ChEBI" id="CHEBI:30616"/>
        <dbReference type="ChEBI" id="CHEBI:33019"/>
        <dbReference type="ChEBI" id="CHEBI:33384"/>
        <dbReference type="ChEBI" id="CHEBI:78442"/>
        <dbReference type="ChEBI" id="CHEBI:78533"/>
        <dbReference type="ChEBI" id="CHEBI:456215"/>
        <dbReference type="EC" id="6.1.1.11"/>
    </reaction>
</comment>
<comment type="pathway">
    <text evidence="1">Aminoacyl-tRNA biosynthesis; selenocysteinyl-tRNA(Sec) biosynthesis; L-seryl-tRNA(Sec) from L-serine and tRNA(Sec): step 1/1.</text>
</comment>
<comment type="subunit">
    <text evidence="1">Homodimer. The tRNA molecule binds across the dimer.</text>
</comment>
<comment type="subcellular location">
    <subcellularLocation>
        <location evidence="1">Cytoplasm</location>
    </subcellularLocation>
</comment>
<comment type="domain">
    <text evidence="1">Consists of two distinct domains, a catalytic core and a N-terminal extension that is involved in tRNA binding.</text>
</comment>
<comment type="similarity">
    <text evidence="1">Belongs to the class-II aminoacyl-tRNA synthetase family. Type-1 seryl-tRNA synthetase subfamily.</text>
</comment>
<dbReference type="EC" id="6.1.1.11" evidence="1"/>
<dbReference type="EMBL" id="CP000431">
    <property type="protein sequence ID" value="ABG95838.1"/>
    <property type="molecule type" value="Genomic_DNA"/>
</dbReference>
<dbReference type="RefSeq" id="WP_009477118.1">
    <property type="nucleotide sequence ID" value="NC_008268.1"/>
</dbReference>
<dbReference type="SMR" id="Q0S9E8"/>
<dbReference type="KEGG" id="rha:RHA1_ro04041"/>
<dbReference type="eggNOG" id="COG0172">
    <property type="taxonomic scope" value="Bacteria"/>
</dbReference>
<dbReference type="HOGENOM" id="CLU_023797_0_1_11"/>
<dbReference type="OrthoDB" id="9804647at2"/>
<dbReference type="UniPathway" id="UPA00906">
    <property type="reaction ID" value="UER00895"/>
</dbReference>
<dbReference type="Proteomes" id="UP000008710">
    <property type="component" value="Chromosome"/>
</dbReference>
<dbReference type="GO" id="GO:0005737">
    <property type="term" value="C:cytoplasm"/>
    <property type="evidence" value="ECO:0007669"/>
    <property type="project" value="UniProtKB-SubCell"/>
</dbReference>
<dbReference type="GO" id="GO:0005524">
    <property type="term" value="F:ATP binding"/>
    <property type="evidence" value="ECO:0007669"/>
    <property type="project" value="UniProtKB-UniRule"/>
</dbReference>
<dbReference type="GO" id="GO:0004828">
    <property type="term" value="F:serine-tRNA ligase activity"/>
    <property type="evidence" value="ECO:0007669"/>
    <property type="project" value="UniProtKB-UniRule"/>
</dbReference>
<dbReference type="GO" id="GO:0016260">
    <property type="term" value="P:selenocysteine biosynthetic process"/>
    <property type="evidence" value="ECO:0007669"/>
    <property type="project" value="UniProtKB-UniRule"/>
</dbReference>
<dbReference type="GO" id="GO:0006434">
    <property type="term" value="P:seryl-tRNA aminoacylation"/>
    <property type="evidence" value="ECO:0007669"/>
    <property type="project" value="UniProtKB-UniRule"/>
</dbReference>
<dbReference type="CDD" id="cd00770">
    <property type="entry name" value="SerRS_core"/>
    <property type="match status" value="1"/>
</dbReference>
<dbReference type="FunFam" id="1.10.287.40:FF:000004">
    <property type="entry name" value="Serine--tRNA ligase"/>
    <property type="match status" value="1"/>
</dbReference>
<dbReference type="Gene3D" id="3.30.930.10">
    <property type="entry name" value="Bira Bifunctional Protein, Domain 2"/>
    <property type="match status" value="1"/>
</dbReference>
<dbReference type="Gene3D" id="1.10.287.40">
    <property type="entry name" value="Serine-tRNA synthetase, tRNA binding domain"/>
    <property type="match status" value="1"/>
</dbReference>
<dbReference type="HAMAP" id="MF_00176">
    <property type="entry name" value="Ser_tRNA_synth_type1"/>
    <property type="match status" value="1"/>
</dbReference>
<dbReference type="InterPro" id="IPR002314">
    <property type="entry name" value="aa-tRNA-synt_IIb"/>
</dbReference>
<dbReference type="InterPro" id="IPR006195">
    <property type="entry name" value="aa-tRNA-synth_II"/>
</dbReference>
<dbReference type="InterPro" id="IPR045864">
    <property type="entry name" value="aa-tRNA-synth_II/BPL/LPL"/>
</dbReference>
<dbReference type="InterPro" id="IPR002317">
    <property type="entry name" value="Ser-tRNA-ligase_type_1"/>
</dbReference>
<dbReference type="InterPro" id="IPR015866">
    <property type="entry name" value="Ser-tRNA-synth_1_N"/>
</dbReference>
<dbReference type="InterPro" id="IPR042103">
    <property type="entry name" value="SerRS_1_N_sf"/>
</dbReference>
<dbReference type="InterPro" id="IPR033729">
    <property type="entry name" value="SerRS_core"/>
</dbReference>
<dbReference type="InterPro" id="IPR010978">
    <property type="entry name" value="tRNA-bd_arm"/>
</dbReference>
<dbReference type="NCBIfam" id="TIGR00414">
    <property type="entry name" value="serS"/>
    <property type="match status" value="1"/>
</dbReference>
<dbReference type="PANTHER" id="PTHR11778">
    <property type="entry name" value="SERYL-TRNA SYNTHETASE"/>
    <property type="match status" value="1"/>
</dbReference>
<dbReference type="Pfam" id="PF02403">
    <property type="entry name" value="Seryl_tRNA_N"/>
    <property type="match status" value="1"/>
</dbReference>
<dbReference type="Pfam" id="PF00587">
    <property type="entry name" value="tRNA-synt_2b"/>
    <property type="match status" value="1"/>
</dbReference>
<dbReference type="PIRSF" id="PIRSF001529">
    <property type="entry name" value="Ser-tRNA-synth_IIa"/>
    <property type="match status" value="1"/>
</dbReference>
<dbReference type="PRINTS" id="PR00981">
    <property type="entry name" value="TRNASYNTHSER"/>
</dbReference>
<dbReference type="SUPFAM" id="SSF55681">
    <property type="entry name" value="Class II aaRS and biotin synthetases"/>
    <property type="match status" value="1"/>
</dbReference>
<dbReference type="SUPFAM" id="SSF46589">
    <property type="entry name" value="tRNA-binding arm"/>
    <property type="match status" value="1"/>
</dbReference>
<dbReference type="PROSITE" id="PS50862">
    <property type="entry name" value="AA_TRNA_LIGASE_II"/>
    <property type="match status" value="1"/>
</dbReference>
<name>SYS_RHOJR</name>
<reference key="1">
    <citation type="journal article" date="2006" name="Proc. Natl. Acad. Sci. U.S.A.">
        <title>The complete genome of Rhodococcus sp. RHA1 provides insights into a catabolic powerhouse.</title>
        <authorList>
            <person name="McLeod M.P."/>
            <person name="Warren R.L."/>
            <person name="Hsiao W.W.L."/>
            <person name="Araki N."/>
            <person name="Myhre M."/>
            <person name="Fernandes C."/>
            <person name="Miyazawa D."/>
            <person name="Wong W."/>
            <person name="Lillquist A.L."/>
            <person name="Wang D."/>
            <person name="Dosanjh M."/>
            <person name="Hara H."/>
            <person name="Petrescu A."/>
            <person name="Morin R.D."/>
            <person name="Yang G."/>
            <person name="Stott J.M."/>
            <person name="Schein J.E."/>
            <person name="Shin H."/>
            <person name="Smailus D."/>
            <person name="Siddiqui A.S."/>
            <person name="Marra M.A."/>
            <person name="Jones S.J.M."/>
            <person name="Holt R."/>
            <person name="Brinkman F.S.L."/>
            <person name="Miyauchi K."/>
            <person name="Fukuda M."/>
            <person name="Davies J.E."/>
            <person name="Mohn W.W."/>
            <person name="Eltis L.D."/>
        </authorList>
    </citation>
    <scope>NUCLEOTIDE SEQUENCE [LARGE SCALE GENOMIC DNA]</scope>
    <source>
        <strain>RHA1</strain>
    </source>
</reference>
<organism>
    <name type="scientific">Rhodococcus jostii (strain RHA1)</name>
    <dbReference type="NCBI Taxonomy" id="101510"/>
    <lineage>
        <taxon>Bacteria</taxon>
        <taxon>Bacillati</taxon>
        <taxon>Actinomycetota</taxon>
        <taxon>Actinomycetes</taxon>
        <taxon>Mycobacteriales</taxon>
        <taxon>Nocardiaceae</taxon>
        <taxon>Rhodococcus</taxon>
    </lineage>
</organism>
<evidence type="ECO:0000255" key="1">
    <source>
        <dbReference type="HAMAP-Rule" id="MF_00176"/>
    </source>
</evidence>
<keyword id="KW-0030">Aminoacyl-tRNA synthetase</keyword>
<keyword id="KW-0067">ATP-binding</keyword>
<keyword id="KW-0963">Cytoplasm</keyword>
<keyword id="KW-0436">Ligase</keyword>
<keyword id="KW-0547">Nucleotide-binding</keyword>
<keyword id="KW-0648">Protein biosynthesis</keyword>
<proteinExistence type="inferred from homology"/>
<gene>
    <name evidence="1" type="primary">serS</name>
    <name type="ordered locus">RHA1_ro04041</name>
</gene>
<sequence length="418" mass="45619">MIDLKFLRENPDAVRESQRTRGEDPALVDALLEADASRRAAVLAGDNLRAEQKAFGKKVGQASPEERPALLEGSKELAAKVKQAEAEQHEAQAALDAAHRAISNVVQEGAPAGGEDDFVTLETVGDIPAFDFEPKDHLELGESLGLIDMERGAKVSGARFYFLTGFGAMLQLGMLQLAAQKAMANGFQMMIPPVLVRPEIMAGTGFLGAHADEVYHLADDDLYLVGTSEVPLAGYHSGEILDLADGPKRYAGWSTCFRREAGSYGKDTRGIIRVHQFDKVEMFTYCKPEDADAEHQRLLAWEREMLAAIDVPYRVIDVAGGDLGSSAARKFDCEAWVPTQQAYRELTSTSNCTTFQARRLGVRYRDENGKPQTAATLNGTLATTRWIVAILENHQQSDGTVRVPEALVPFVGTDVLKP</sequence>